<name>APT_FRACC</name>
<dbReference type="EC" id="2.4.2.7" evidence="1"/>
<dbReference type="EMBL" id="CP000249">
    <property type="protein sequence ID" value="ABD10752.1"/>
    <property type="molecule type" value="Genomic_DNA"/>
</dbReference>
<dbReference type="RefSeq" id="WP_011435817.1">
    <property type="nucleotide sequence ID" value="NZ_LRTJ01000010.1"/>
</dbReference>
<dbReference type="SMR" id="Q2JD90"/>
<dbReference type="STRING" id="106370.Francci3_1375"/>
<dbReference type="KEGG" id="fra:Francci3_1375"/>
<dbReference type="eggNOG" id="COG0503">
    <property type="taxonomic scope" value="Bacteria"/>
</dbReference>
<dbReference type="HOGENOM" id="CLU_063339_3_3_11"/>
<dbReference type="OrthoDB" id="9803963at2"/>
<dbReference type="PhylomeDB" id="Q2JD90"/>
<dbReference type="UniPathway" id="UPA00588">
    <property type="reaction ID" value="UER00646"/>
</dbReference>
<dbReference type="Proteomes" id="UP000001937">
    <property type="component" value="Chromosome"/>
</dbReference>
<dbReference type="GO" id="GO:0005737">
    <property type="term" value="C:cytoplasm"/>
    <property type="evidence" value="ECO:0007669"/>
    <property type="project" value="UniProtKB-SubCell"/>
</dbReference>
<dbReference type="GO" id="GO:0002055">
    <property type="term" value="F:adenine binding"/>
    <property type="evidence" value="ECO:0007669"/>
    <property type="project" value="TreeGrafter"/>
</dbReference>
<dbReference type="GO" id="GO:0003999">
    <property type="term" value="F:adenine phosphoribosyltransferase activity"/>
    <property type="evidence" value="ECO:0007669"/>
    <property type="project" value="UniProtKB-UniRule"/>
</dbReference>
<dbReference type="GO" id="GO:0016208">
    <property type="term" value="F:AMP binding"/>
    <property type="evidence" value="ECO:0007669"/>
    <property type="project" value="TreeGrafter"/>
</dbReference>
<dbReference type="GO" id="GO:0006168">
    <property type="term" value="P:adenine salvage"/>
    <property type="evidence" value="ECO:0007669"/>
    <property type="project" value="InterPro"/>
</dbReference>
<dbReference type="GO" id="GO:0044209">
    <property type="term" value="P:AMP salvage"/>
    <property type="evidence" value="ECO:0007669"/>
    <property type="project" value="UniProtKB-UniRule"/>
</dbReference>
<dbReference type="GO" id="GO:0006166">
    <property type="term" value="P:purine ribonucleoside salvage"/>
    <property type="evidence" value="ECO:0007669"/>
    <property type="project" value="UniProtKB-KW"/>
</dbReference>
<dbReference type="CDD" id="cd06223">
    <property type="entry name" value="PRTases_typeI"/>
    <property type="match status" value="1"/>
</dbReference>
<dbReference type="FunFam" id="3.40.50.2020:FF:000021">
    <property type="entry name" value="Adenine phosphoribosyltransferase"/>
    <property type="match status" value="1"/>
</dbReference>
<dbReference type="Gene3D" id="3.40.50.2020">
    <property type="match status" value="1"/>
</dbReference>
<dbReference type="HAMAP" id="MF_00004">
    <property type="entry name" value="Aden_phosphoribosyltr"/>
    <property type="match status" value="1"/>
</dbReference>
<dbReference type="InterPro" id="IPR005764">
    <property type="entry name" value="Ade_phspho_trans"/>
</dbReference>
<dbReference type="InterPro" id="IPR000836">
    <property type="entry name" value="PRibTrfase_dom"/>
</dbReference>
<dbReference type="InterPro" id="IPR029057">
    <property type="entry name" value="PRTase-like"/>
</dbReference>
<dbReference type="InterPro" id="IPR050054">
    <property type="entry name" value="UPRTase/APRTase"/>
</dbReference>
<dbReference type="NCBIfam" id="TIGR01090">
    <property type="entry name" value="apt"/>
    <property type="match status" value="1"/>
</dbReference>
<dbReference type="NCBIfam" id="NF002634">
    <property type="entry name" value="PRK02304.1-3"/>
    <property type="match status" value="1"/>
</dbReference>
<dbReference type="NCBIfam" id="NF002636">
    <property type="entry name" value="PRK02304.1-5"/>
    <property type="match status" value="1"/>
</dbReference>
<dbReference type="PANTHER" id="PTHR32315">
    <property type="entry name" value="ADENINE PHOSPHORIBOSYLTRANSFERASE"/>
    <property type="match status" value="1"/>
</dbReference>
<dbReference type="PANTHER" id="PTHR32315:SF3">
    <property type="entry name" value="ADENINE PHOSPHORIBOSYLTRANSFERASE"/>
    <property type="match status" value="1"/>
</dbReference>
<dbReference type="Pfam" id="PF00156">
    <property type="entry name" value="Pribosyltran"/>
    <property type="match status" value="1"/>
</dbReference>
<dbReference type="SUPFAM" id="SSF53271">
    <property type="entry name" value="PRTase-like"/>
    <property type="match status" value="1"/>
</dbReference>
<dbReference type="PROSITE" id="PS00103">
    <property type="entry name" value="PUR_PYR_PR_TRANSFER"/>
    <property type="match status" value="1"/>
</dbReference>
<evidence type="ECO:0000255" key="1">
    <source>
        <dbReference type="HAMAP-Rule" id="MF_00004"/>
    </source>
</evidence>
<proteinExistence type="inferred from homology"/>
<reference key="1">
    <citation type="journal article" date="2007" name="Genome Res.">
        <title>Genome characteristics of facultatively symbiotic Frankia sp. strains reflect host range and host plant biogeography.</title>
        <authorList>
            <person name="Normand P."/>
            <person name="Lapierre P."/>
            <person name="Tisa L.S."/>
            <person name="Gogarten J.P."/>
            <person name="Alloisio N."/>
            <person name="Bagnarol E."/>
            <person name="Bassi C.A."/>
            <person name="Berry A.M."/>
            <person name="Bickhart D.M."/>
            <person name="Choisne N."/>
            <person name="Couloux A."/>
            <person name="Cournoyer B."/>
            <person name="Cruveiller S."/>
            <person name="Daubin V."/>
            <person name="Demange N."/>
            <person name="Francino M.P."/>
            <person name="Goltsman E."/>
            <person name="Huang Y."/>
            <person name="Kopp O.R."/>
            <person name="Labarre L."/>
            <person name="Lapidus A."/>
            <person name="Lavire C."/>
            <person name="Marechal J."/>
            <person name="Martinez M."/>
            <person name="Mastronunzio J.E."/>
            <person name="Mullin B.C."/>
            <person name="Niemann J."/>
            <person name="Pujic P."/>
            <person name="Rawnsley T."/>
            <person name="Rouy Z."/>
            <person name="Schenowitz C."/>
            <person name="Sellstedt A."/>
            <person name="Tavares F."/>
            <person name="Tomkins J.P."/>
            <person name="Vallenet D."/>
            <person name="Valverde C."/>
            <person name="Wall L.G."/>
            <person name="Wang Y."/>
            <person name="Medigue C."/>
            <person name="Benson D.R."/>
        </authorList>
    </citation>
    <scope>NUCLEOTIDE SEQUENCE [LARGE SCALE GENOMIC DNA]</scope>
    <source>
        <strain>DSM 45818 / CECT 9043 / HFP020203 / CcI3</strain>
    </source>
</reference>
<organism>
    <name type="scientific">Frankia casuarinae (strain DSM 45818 / CECT 9043 / HFP020203 / CcI3)</name>
    <dbReference type="NCBI Taxonomy" id="106370"/>
    <lineage>
        <taxon>Bacteria</taxon>
        <taxon>Bacillati</taxon>
        <taxon>Actinomycetota</taxon>
        <taxon>Actinomycetes</taxon>
        <taxon>Frankiales</taxon>
        <taxon>Frankiaceae</taxon>
        <taxon>Frankia</taxon>
    </lineage>
</organism>
<protein>
    <recommendedName>
        <fullName evidence="1">Adenine phosphoribosyltransferase</fullName>
        <shortName evidence="1">APRT</shortName>
        <ecNumber evidence="1">2.4.2.7</ecNumber>
    </recommendedName>
</protein>
<gene>
    <name evidence="1" type="primary">apt</name>
    <name type="ordered locus">Francci3_1375</name>
</gene>
<feature type="chain" id="PRO_0000321365" description="Adenine phosphoribosyltransferase">
    <location>
        <begin position="1"/>
        <end position="188"/>
    </location>
</feature>
<sequence length="188" mass="19206">MTSIDDAPQRSAAHDAVAEVLRGHIRDIPDWPQPGVVFKDITPLLATPTAFGVVIGALADAARALGATTIAGIEARGFLLAAPVADRLGTGLVPIRKQGKLPGPTRSASYDLEYGAATIEIHADAVHDGDRVLLVDDVLATGGTAAAAHSLLAAGGGEVVGLAVLMELSFLPGRDRVAPLDVVSLLTI</sequence>
<comment type="function">
    <text evidence="1">Catalyzes a salvage reaction resulting in the formation of AMP, that is energically less costly than de novo synthesis.</text>
</comment>
<comment type="catalytic activity">
    <reaction evidence="1">
        <text>AMP + diphosphate = 5-phospho-alpha-D-ribose 1-diphosphate + adenine</text>
        <dbReference type="Rhea" id="RHEA:16609"/>
        <dbReference type="ChEBI" id="CHEBI:16708"/>
        <dbReference type="ChEBI" id="CHEBI:33019"/>
        <dbReference type="ChEBI" id="CHEBI:58017"/>
        <dbReference type="ChEBI" id="CHEBI:456215"/>
        <dbReference type="EC" id="2.4.2.7"/>
    </reaction>
</comment>
<comment type="pathway">
    <text evidence="1">Purine metabolism; AMP biosynthesis via salvage pathway; AMP from adenine: step 1/1.</text>
</comment>
<comment type="subunit">
    <text evidence="1">Homodimer.</text>
</comment>
<comment type="subcellular location">
    <subcellularLocation>
        <location evidence="1">Cytoplasm</location>
    </subcellularLocation>
</comment>
<comment type="similarity">
    <text evidence="1">Belongs to the purine/pyrimidine phosphoribosyltransferase family.</text>
</comment>
<keyword id="KW-0963">Cytoplasm</keyword>
<keyword id="KW-0328">Glycosyltransferase</keyword>
<keyword id="KW-0660">Purine salvage</keyword>
<keyword id="KW-1185">Reference proteome</keyword>
<keyword id="KW-0808">Transferase</keyword>
<accession>Q2JD90</accession>